<sequence length="554" mass="60480">MQYLPEKDYELPRLDLLTLLFESQLSLTTESTILHAEAADPTNHITKAQARTITKRLAHVFRSEFGIGADGPGKDAVMCISANQVLLPAVFCGIIGAGGVYTAASTALTASEVSKQLRQSRSKVIVACPENRAKARDAARECGIPPDRVLVLESMGHRRLLCQGNFGRNYLQATAELDWERIADIDALENTTICLLYSSGTTGPPKGVMLSHMNLVSEALFTQLVLRDSKEGKPHLNVPYRTVGHLPTAHIAGCLGCFITPAVAGGTVYWMPRFNIDEFIDYCKKYAVTFLSTAPPVYHGIVRSDRVTDQFKTLVRAESGAAPLSLELQEQAEKMLGCTISQRWGMTESTGSVTTMPWGQSDNTGGISPLLPNMRLRLVDERMRDVRSGDEGEILLKGPMITKGYFENPEATAEAFTTDGWYKTGDIGVYKDGKIIMVDRKKELIKYKGLQVSPVEIEGFLLTHPGVADVAVVGARDPEAPGNELPRAYVVIKAGSSVSEAELKEYVKSNLAGHKQLRGGVVFIDEIPKSASGKILRRILRDQARSSAGREAKL</sequence>
<dbReference type="EC" id="6.2.1.-"/>
<dbReference type="EMBL" id="AACD01000006">
    <property type="protein sequence ID" value="EAA65777.1"/>
    <property type="status" value="ALT_SEQ"/>
    <property type="molecule type" value="Genomic_DNA"/>
</dbReference>
<dbReference type="EMBL" id="BN001308">
    <property type="protein sequence ID" value="CBF89623.1"/>
    <property type="molecule type" value="Genomic_DNA"/>
</dbReference>
<dbReference type="RefSeq" id="XP_657975.1">
    <property type="nucleotide sequence ID" value="XM_652883.1"/>
</dbReference>
<dbReference type="SMR" id="C8VTR6"/>
<dbReference type="STRING" id="227321.C8VTR6"/>
<dbReference type="EnsemblFungi" id="CBF89623">
    <property type="protein sequence ID" value="CBF89623"/>
    <property type="gene ID" value="ANIA_10074"/>
</dbReference>
<dbReference type="VEuPathDB" id="FungiDB:AN10074"/>
<dbReference type="eggNOG" id="KOG1176">
    <property type="taxonomic scope" value="Eukaryota"/>
</dbReference>
<dbReference type="HOGENOM" id="CLU_413324_0_0_1"/>
<dbReference type="InParanoid" id="C8VTR6"/>
<dbReference type="OMA" id="GKIYMVD"/>
<dbReference type="OrthoDB" id="1898221at2759"/>
<dbReference type="Proteomes" id="UP000000560">
    <property type="component" value="Chromosome VIII"/>
</dbReference>
<dbReference type="GO" id="GO:0016405">
    <property type="term" value="F:CoA-ligase activity"/>
    <property type="evidence" value="ECO:0000318"/>
    <property type="project" value="GO_Central"/>
</dbReference>
<dbReference type="CDD" id="cd05911">
    <property type="entry name" value="Firefly_Luc_like"/>
    <property type="match status" value="1"/>
</dbReference>
<dbReference type="FunFam" id="3.30.300.30:FF:000007">
    <property type="entry name" value="4-coumarate--CoA ligase 2"/>
    <property type="match status" value="1"/>
</dbReference>
<dbReference type="Gene3D" id="3.30.300.30">
    <property type="match status" value="1"/>
</dbReference>
<dbReference type="Gene3D" id="3.40.50.12780">
    <property type="entry name" value="N-terminal domain of ligase-like"/>
    <property type="match status" value="1"/>
</dbReference>
<dbReference type="InterPro" id="IPR025110">
    <property type="entry name" value="AMP-bd_C"/>
</dbReference>
<dbReference type="InterPro" id="IPR045851">
    <property type="entry name" value="AMP-bd_C_sf"/>
</dbReference>
<dbReference type="InterPro" id="IPR020845">
    <property type="entry name" value="AMP-binding_CS"/>
</dbReference>
<dbReference type="InterPro" id="IPR000873">
    <property type="entry name" value="AMP-dep_synth/lig_dom"/>
</dbReference>
<dbReference type="InterPro" id="IPR042099">
    <property type="entry name" value="ANL_N_sf"/>
</dbReference>
<dbReference type="PANTHER" id="PTHR24096:SF149">
    <property type="entry name" value="AMP-BINDING DOMAIN-CONTAINING PROTEIN-RELATED"/>
    <property type="match status" value="1"/>
</dbReference>
<dbReference type="PANTHER" id="PTHR24096">
    <property type="entry name" value="LONG-CHAIN-FATTY-ACID--COA LIGASE"/>
    <property type="match status" value="1"/>
</dbReference>
<dbReference type="Pfam" id="PF00501">
    <property type="entry name" value="AMP-binding"/>
    <property type="match status" value="1"/>
</dbReference>
<dbReference type="Pfam" id="PF13193">
    <property type="entry name" value="AMP-binding_C"/>
    <property type="match status" value="1"/>
</dbReference>
<dbReference type="SUPFAM" id="SSF56801">
    <property type="entry name" value="Acetyl-CoA synthetase-like"/>
    <property type="match status" value="1"/>
</dbReference>
<dbReference type="PROSITE" id="PS00455">
    <property type="entry name" value="AMP_BINDING"/>
    <property type="match status" value="1"/>
</dbReference>
<gene>
    <name type="ORF">AN10074</name>
</gene>
<comment type="similarity">
    <text evidence="2">Belongs to the ATP-dependent AMP-binding enzyme family.</text>
</comment>
<comment type="sequence caution" evidence="2">
    <conflict type="erroneous gene model prediction">
        <sequence resource="EMBL-CDS" id="EAA65777"/>
    </conflict>
    <text>The predicted gene AN0371 has been split into 2 genes: AN10067 and AN10074.</text>
</comment>
<reference key="1">
    <citation type="journal article" date="2005" name="Nature">
        <title>Sequencing of Aspergillus nidulans and comparative analysis with A. fumigatus and A. oryzae.</title>
        <authorList>
            <person name="Galagan J.E."/>
            <person name="Calvo S.E."/>
            <person name="Cuomo C."/>
            <person name="Ma L.-J."/>
            <person name="Wortman J.R."/>
            <person name="Batzoglou S."/>
            <person name="Lee S.-I."/>
            <person name="Bastuerkmen M."/>
            <person name="Spevak C.C."/>
            <person name="Clutterbuck J."/>
            <person name="Kapitonov V."/>
            <person name="Jurka J."/>
            <person name="Scazzocchio C."/>
            <person name="Farman M.L."/>
            <person name="Butler J."/>
            <person name="Purcell S."/>
            <person name="Harris S."/>
            <person name="Braus G.H."/>
            <person name="Draht O."/>
            <person name="Busch S."/>
            <person name="D'Enfert C."/>
            <person name="Bouchier C."/>
            <person name="Goldman G.H."/>
            <person name="Bell-Pedersen D."/>
            <person name="Griffiths-Jones S."/>
            <person name="Doonan J.H."/>
            <person name="Yu J."/>
            <person name="Vienken K."/>
            <person name="Pain A."/>
            <person name="Freitag M."/>
            <person name="Selker E.U."/>
            <person name="Archer D.B."/>
            <person name="Penalva M.A."/>
            <person name="Oakley B.R."/>
            <person name="Momany M."/>
            <person name="Tanaka T."/>
            <person name="Kumagai T."/>
            <person name="Asai K."/>
            <person name="Machida M."/>
            <person name="Nierman W.C."/>
            <person name="Denning D.W."/>
            <person name="Caddick M.X."/>
            <person name="Hynes M."/>
            <person name="Paoletti M."/>
            <person name="Fischer R."/>
            <person name="Miller B.L."/>
            <person name="Dyer P.S."/>
            <person name="Sachs M.S."/>
            <person name="Osmani S.A."/>
            <person name="Birren B.W."/>
        </authorList>
    </citation>
    <scope>NUCLEOTIDE SEQUENCE [LARGE SCALE GENOMIC DNA]</scope>
    <source>
        <strain>FGSC A4 / ATCC 38163 / CBS 112.46 / NRRL 194 / M139</strain>
    </source>
</reference>
<reference key="2">
    <citation type="journal article" date="2009" name="Fungal Genet. Biol.">
        <title>The 2008 update of the Aspergillus nidulans genome annotation: a community effort.</title>
        <authorList>
            <person name="Wortman J.R."/>
            <person name="Gilsenan J.M."/>
            <person name="Joardar V."/>
            <person name="Deegan J."/>
            <person name="Clutterbuck J."/>
            <person name="Andersen M.R."/>
            <person name="Archer D."/>
            <person name="Bencina M."/>
            <person name="Braus G."/>
            <person name="Coutinho P."/>
            <person name="von Dohren H."/>
            <person name="Doonan J."/>
            <person name="Driessen A.J."/>
            <person name="Durek P."/>
            <person name="Espeso E."/>
            <person name="Fekete E."/>
            <person name="Flipphi M."/>
            <person name="Estrada C.G."/>
            <person name="Geysens S."/>
            <person name="Goldman G."/>
            <person name="de Groot P.W."/>
            <person name="Hansen K."/>
            <person name="Harris S.D."/>
            <person name="Heinekamp T."/>
            <person name="Helmstaedt K."/>
            <person name="Henrissat B."/>
            <person name="Hofmann G."/>
            <person name="Homan T."/>
            <person name="Horio T."/>
            <person name="Horiuchi H."/>
            <person name="James S."/>
            <person name="Jones M."/>
            <person name="Karaffa L."/>
            <person name="Karanyi Z."/>
            <person name="Kato M."/>
            <person name="Keller N."/>
            <person name="Kelly D.E."/>
            <person name="Kiel J.A."/>
            <person name="Kim J.M."/>
            <person name="van der Klei I.J."/>
            <person name="Klis F.M."/>
            <person name="Kovalchuk A."/>
            <person name="Krasevec N."/>
            <person name="Kubicek C.P."/>
            <person name="Liu B."/>
            <person name="Maccabe A."/>
            <person name="Meyer V."/>
            <person name="Mirabito P."/>
            <person name="Miskei M."/>
            <person name="Mos M."/>
            <person name="Mullins J."/>
            <person name="Nelson D.R."/>
            <person name="Nielsen J."/>
            <person name="Oakley B.R."/>
            <person name="Osmani S.A."/>
            <person name="Pakula T."/>
            <person name="Paszewski A."/>
            <person name="Paulsen I."/>
            <person name="Pilsyk S."/>
            <person name="Pocsi I."/>
            <person name="Punt P.J."/>
            <person name="Ram A.F."/>
            <person name="Ren Q."/>
            <person name="Robellet X."/>
            <person name="Robson G."/>
            <person name="Seiboth B."/>
            <person name="van Solingen P."/>
            <person name="Specht T."/>
            <person name="Sun J."/>
            <person name="Taheri-Talesh N."/>
            <person name="Takeshita N."/>
            <person name="Ussery D."/>
            <person name="vanKuyk P.A."/>
            <person name="Visser H."/>
            <person name="van de Vondervoort P.J."/>
            <person name="de Vries R.P."/>
            <person name="Walton J."/>
            <person name="Xiang X."/>
            <person name="Xiong Y."/>
            <person name="Zeng A.P."/>
            <person name="Brandt B.W."/>
            <person name="Cornell M.J."/>
            <person name="van den Hondel C.A."/>
            <person name="Visser J."/>
            <person name="Oliver S.G."/>
            <person name="Turner G."/>
        </authorList>
    </citation>
    <scope>GENOME REANNOTATION</scope>
    <source>
        <strain>FGSC A4 / ATCC 38163 / CBS 112.46 / NRRL 194 / M139</strain>
    </source>
</reference>
<name>Y0074_EMENI</name>
<accession>C8VTR6</accession>
<accession>Q5BGF9</accession>
<feature type="chain" id="PRO_0000413174" description="Putative acyl-coenzyme A synthetase">
    <location>
        <begin position="1"/>
        <end position="554"/>
    </location>
</feature>
<feature type="binding site" evidence="1">
    <location>
        <begin position="195"/>
        <end position="206"/>
    </location>
    <ligand>
        <name>AMP</name>
        <dbReference type="ChEBI" id="CHEBI:456215"/>
    </ligand>
</feature>
<protein>
    <recommendedName>
        <fullName>Putative acyl-coenzyme A synthetase</fullName>
        <ecNumber>6.2.1.-</ecNumber>
    </recommendedName>
</protein>
<proteinExistence type="inferred from homology"/>
<organism>
    <name type="scientific">Emericella nidulans (strain FGSC A4 / ATCC 38163 / CBS 112.46 / NRRL 194 / M139)</name>
    <name type="common">Aspergillus nidulans</name>
    <dbReference type="NCBI Taxonomy" id="227321"/>
    <lineage>
        <taxon>Eukaryota</taxon>
        <taxon>Fungi</taxon>
        <taxon>Dikarya</taxon>
        <taxon>Ascomycota</taxon>
        <taxon>Pezizomycotina</taxon>
        <taxon>Eurotiomycetes</taxon>
        <taxon>Eurotiomycetidae</taxon>
        <taxon>Eurotiales</taxon>
        <taxon>Aspergillaceae</taxon>
        <taxon>Aspergillus</taxon>
        <taxon>Aspergillus subgen. Nidulantes</taxon>
    </lineage>
</organism>
<evidence type="ECO:0000250" key="1"/>
<evidence type="ECO:0000305" key="2"/>
<keyword id="KW-0436">Ligase</keyword>
<keyword id="KW-1185">Reference proteome</keyword>